<organism>
    <name type="scientific">Caenorhabditis elegans</name>
    <dbReference type="NCBI Taxonomy" id="6239"/>
    <lineage>
        <taxon>Eukaryota</taxon>
        <taxon>Metazoa</taxon>
        <taxon>Ecdysozoa</taxon>
        <taxon>Nematoda</taxon>
        <taxon>Chromadorea</taxon>
        <taxon>Rhabditida</taxon>
        <taxon>Rhabditina</taxon>
        <taxon>Rhabditomorpha</taxon>
        <taxon>Rhabditoidea</taxon>
        <taxon>Rhabditidae</taxon>
        <taxon>Peloderinae</taxon>
        <taxon>Caenorhabditis</taxon>
    </lineage>
</organism>
<feature type="chain" id="PRO_0000187321" description="Putative pyrroline-5-carboxylate reductase 4">
    <location>
        <begin position="1"/>
        <end position="299"/>
    </location>
</feature>
<evidence type="ECO:0000305" key="1"/>
<evidence type="ECO:0000312" key="2">
    <source>
        <dbReference type="WormBase" id="F55G1.9"/>
    </source>
</evidence>
<sequence>MTIDTELTNGSSESVPFVFIGGGNMAAAIIKGCQNKGFTPKSNIVIGVQTEKSAEKWRQLGYKNVFTNTLEMLERYSTAIYVICVKPQVFEEVVSSWPVNSRPEFIISVMAGVPLKVLNAKLPFVSGNTTIVRLMPNVASSIGAGASTMCYEKNEKIMNQDSHIELAREFAECVGTVELIPERCFNPAMAIGGSSPAWTFMYIESLADGAVAQGLGRAEAKRLAAQAVLGAAQMVLNSNSGFDIETQHFGSLKDMVCSPGGTTIEGVRALEKNGFRYAVMEAVVAASTKADEMAKSLAK</sequence>
<name>P5CR4_CAEEL</name>
<keyword id="KW-0028">Amino-acid biosynthesis</keyword>
<keyword id="KW-0521">NADP</keyword>
<keyword id="KW-0560">Oxidoreductase</keyword>
<keyword id="KW-0641">Proline biosynthesis</keyword>
<keyword id="KW-1185">Reference proteome</keyword>
<protein>
    <recommendedName>
        <fullName evidence="2">Putative pyrroline-5-carboxylate reductase 4</fullName>
        <shortName>P5C reductase</shortName>
        <shortName>P5CR</shortName>
        <ecNumber>1.5.1.2</ecNumber>
    </recommendedName>
</protein>
<comment type="catalytic activity">
    <reaction>
        <text>L-proline + NADP(+) = (S)-1-pyrroline-5-carboxylate + NADPH + 2 H(+)</text>
        <dbReference type="Rhea" id="RHEA:14109"/>
        <dbReference type="ChEBI" id="CHEBI:15378"/>
        <dbReference type="ChEBI" id="CHEBI:17388"/>
        <dbReference type="ChEBI" id="CHEBI:57783"/>
        <dbReference type="ChEBI" id="CHEBI:58349"/>
        <dbReference type="ChEBI" id="CHEBI:60039"/>
        <dbReference type="EC" id="1.5.1.2"/>
    </reaction>
</comment>
<comment type="catalytic activity">
    <reaction>
        <text>L-proline + NAD(+) = (S)-1-pyrroline-5-carboxylate + NADH + 2 H(+)</text>
        <dbReference type="Rhea" id="RHEA:14105"/>
        <dbReference type="ChEBI" id="CHEBI:15378"/>
        <dbReference type="ChEBI" id="CHEBI:17388"/>
        <dbReference type="ChEBI" id="CHEBI:57540"/>
        <dbReference type="ChEBI" id="CHEBI:57945"/>
        <dbReference type="ChEBI" id="CHEBI:60039"/>
        <dbReference type="EC" id="1.5.1.2"/>
    </reaction>
</comment>
<comment type="pathway">
    <text>Amino-acid biosynthesis; L-proline biosynthesis; L-proline from L-glutamate 5-semialdehyde: step 1/1.</text>
</comment>
<comment type="similarity">
    <text evidence="1">Belongs to the pyrroline-5-carboxylate reductase family.</text>
</comment>
<proteinExistence type="inferred from homology"/>
<gene>
    <name evidence="2" type="primary">pycr-4</name>
    <name type="ORF">F55G1.9</name>
</gene>
<dbReference type="EC" id="1.5.1.2"/>
<dbReference type="EMBL" id="FO081135">
    <property type="protein sequence ID" value="CCD69396.1"/>
    <property type="molecule type" value="Genomic_DNA"/>
</dbReference>
<dbReference type="PIR" id="T29226">
    <property type="entry name" value="T29226"/>
</dbReference>
<dbReference type="RefSeq" id="NP_501199.1">
    <property type="nucleotide sequence ID" value="NM_068798.6"/>
</dbReference>
<dbReference type="SMR" id="Q20848"/>
<dbReference type="BioGRID" id="42637">
    <property type="interactions" value="9"/>
</dbReference>
<dbReference type="FunCoup" id="Q20848">
    <property type="interactions" value="95"/>
</dbReference>
<dbReference type="IntAct" id="Q20848">
    <property type="interactions" value="3"/>
</dbReference>
<dbReference type="STRING" id="6239.F55G1.9.2"/>
<dbReference type="iPTMnet" id="Q20848"/>
<dbReference type="PaxDb" id="6239-F55G1.9"/>
<dbReference type="PeptideAtlas" id="Q20848"/>
<dbReference type="EnsemblMetazoa" id="F55G1.9.1">
    <property type="protein sequence ID" value="F55G1.9.1"/>
    <property type="gene ID" value="WBGene00018904"/>
</dbReference>
<dbReference type="GeneID" id="177519"/>
<dbReference type="KEGG" id="cel:CELE_F55G1.9"/>
<dbReference type="UCSC" id="F55G1.9">
    <property type="organism name" value="c. elegans"/>
</dbReference>
<dbReference type="AGR" id="WB:WBGene00018904"/>
<dbReference type="CTD" id="177519"/>
<dbReference type="WormBase" id="F55G1.9">
    <property type="protein sequence ID" value="CE07286"/>
    <property type="gene ID" value="WBGene00018904"/>
    <property type="gene designation" value="pycr-4"/>
</dbReference>
<dbReference type="eggNOG" id="KOG3124">
    <property type="taxonomic scope" value="Eukaryota"/>
</dbReference>
<dbReference type="GeneTree" id="ENSGT00950000183044"/>
<dbReference type="HOGENOM" id="CLU_042344_3_1_1"/>
<dbReference type="InParanoid" id="Q20848"/>
<dbReference type="OMA" id="IPNMGAQ"/>
<dbReference type="OrthoDB" id="10263291at2759"/>
<dbReference type="PhylomeDB" id="Q20848"/>
<dbReference type="Reactome" id="R-CEL-8964539">
    <property type="pathway name" value="Glutamate and glutamine metabolism"/>
</dbReference>
<dbReference type="UniPathway" id="UPA00098">
    <property type="reaction ID" value="UER00361"/>
</dbReference>
<dbReference type="PRO" id="PR:Q20848"/>
<dbReference type="Proteomes" id="UP000001940">
    <property type="component" value="Chromosome IV"/>
</dbReference>
<dbReference type="Bgee" id="WBGene00018904">
    <property type="expression patterns" value="Expressed in germ line (C elegans) and 4 other cell types or tissues"/>
</dbReference>
<dbReference type="GO" id="GO:0004735">
    <property type="term" value="F:pyrroline-5-carboxylate reductase activity"/>
    <property type="evidence" value="ECO:0000318"/>
    <property type="project" value="GO_Central"/>
</dbReference>
<dbReference type="GO" id="GO:0055129">
    <property type="term" value="P:L-proline biosynthetic process"/>
    <property type="evidence" value="ECO:0000318"/>
    <property type="project" value="GO_Central"/>
</dbReference>
<dbReference type="FunFam" id="1.10.3730.10:FF:000001">
    <property type="entry name" value="Pyrroline-5-carboxylate reductase"/>
    <property type="match status" value="1"/>
</dbReference>
<dbReference type="Gene3D" id="3.40.50.720">
    <property type="entry name" value="NAD(P)-binding Rossmann-like Domain"/>
    <property type="match status" value="1"/>
</dbReference>
<dbReference type="Gene3D" id="1.10.3730.10">
    <property type="entry name" value="ProC C-terminal domain-like"/>
    <property type="match status" value="1"/>
</dbReference>
<dbReference type="HAMAP" id="MF_01925">
    <property type="entry name" value="P5C_reductase"/>
    <property type="match status" value="1"/>
</dbReference>
<dbReference type="InterPro" id="IPR008927">
    <property type="entry name" value="6-PGluconate_DH-like_C_sf"/>
</dbReference>
<dbReference type="InterPro" id="IPR036291">
    <property type="entry name" value="NAD(P)-bd_dom_sf"/>
</dbReference>
<dbReference type="InterPro" id="IPR028939">
    <property type="entry name" value="P5C_Rdtase_cat_N"/>
</dbReference>
<dbReference type="InterPro" id="IPR053790">
    <property type="entry name" value="P5CR-like_CS"/>
</dbReference>
<dbReference type="InterPro" id="IPR029036">
    <property type="entry name" value="P5CR_dimer"/>
</dbReference>
<dbReference type="InterPro" id="IPR000304">
    <property type="entry name" value="Pyrroline-COOH_reductase"/>
</dbReference>
<dbReference type="NCBIfam" id="TIGR00112">
    <property type="entry name" value="proC"/>
    <property type="match status" value="1"/>
</dbReference>
<dbReference type="PANTHER" id="PTHR11645">
    <property type="entry name" value="PYRROLINE-5-CARBOXYLATE REDUCTASE"/>
    <property type="match status" value="1"/>
</dbReference>
<dbReference type="PANTHER" id="PTHR11645:SF64">
    <property type="entry name" value="PYRROLINE-5-CARBOXYLATE REDUCTASE-RELATED"/>
    <property type="match status" value="1"/>
</dbReference>
<dbReference type="Pfam" id="PF03807">
    <property type="entry name" value="F420_oxidored"/>
    <property type="match status" value="1"/>
</dbReference>
<dbReference type="Pfam" id="PF14748">
    <property type="entry name" value="P5CR_dimer"/>
    <property type="match status" value="1"/>
</dbReference>
<dbReference type="PIRSF" id="PIRSF000193">
    <property type="entry name" value="Pyrrol-5-carb_rd"/>
    <property type="match status" value="1"/>
</dbReference>
<dbReference type="SUPFAM" id="SSF48179">
    <property type="entry name" value="6-phosphogluconate dehydrogenase C-terminal domain-like"/>
    <property type="match status" value="1"/>
</dbReference>
<dbReference type="SUPFAM" id="SSF51735">
    <property type="entry name" value="NAD(P)-binding Rossmann-fold domains"/>
    <property type="match status" value="1"/>
</dbReference>
<dbReference type="PROSITE" id="PS00521">
    <property type="entry name" value="P5CR"/>
    <property type="match status" value="1"/>
</dbReference>
<accession>Q20848</accession>
<reference key="1">
    <citation type="journal article" date="1998" name="Science">
        <title>Genome sequence of the nematode C. elegans: a platform for investigating biology.</title>
        <authorList>
            <consortium name="The C. elegans sequencing consortium"/>
        </authorList>
    </citation>
    <scope>NUCLEOTIDE SEQUENCE [LARGE SCALE GENOMIC DNA]</scope>
    <source>
        <strain>Bristol N2</strain>
    </source>
</reference>